<comment type="function">
    <text evidence="1">This protein binds specifically to 23S rRNA; its binding is stimulated by other ribosomal proteins, e.g. L4, L17, and L20. It is important during the early stages of 50S assembly. It makes multiple contacts with different domains of the 23S rRNA in the assembled 50S subunit and ribosome (By similarity).</text>
</comment>
<comment type="function">
    <text evidence="1">The globular domain of the protein is located near the polypeptide exit tunnel on the outside of the subunit, while an extended beta-hairpin is found that lines the wall of the exit tunnel in the center of the 70S ribosome.</text>
</comment>
<comment type="subunit">
    <text evidence="1">Part of the 50S ribosomal subunit.</text>
</comment>
<comment type="similarity">
    <text evidence="1">Belongs to the universal ribosomal protein uL22 family.</text>
</comment>
<feature type="chain" id="PRO_0000243201" description="Large ribosomal subunit protein uL22">
    <location>
        <begin position="1"/>
        <end position="110"/>
    </location>
</feature>
<dbReference type="EMBL" id="CP000282">
    <property type="protein sequence ID" value="ABD80227.1"/>
    <property type="molecule type" value="Genomic_DNA"/>
</dbReference>
<dbReference type="RefSeq" id="WP_011467447.1">
    <property type="nucleotide sequence ID" value="NC_007912.1"/>
</dbReference>
<dbReference type="SMR" id="Q21M52"/>
<dbReference type="STRING" id="203122.Sde_0965"/>
<dbReference type="GeneID" id="98612650"/>
<dbReference type="KEGG" id="sde:Sde_0965"/>
<dbReference type="eggNOG" id="COG0091">
    <property type="taxonomic scope" value="Bacteria"/>
</dbReference>
<dbReference type="HOGENOM" id="CLU_083987_3_3_6"/>
<dbReference type="OrthoDB" id="9805969at2"/>
<dbReference type="Proteomes" id="UP000001947">
    <property type="component" value="Chromosome"/>
</dbReference>
<dbReference type="GO" id="GO:0022625">
    <property type="term" value="C:cytosolic large ribosomal subunit"/>
    <property type="evidence" value="ECO:0007669"/>
    <property type="project" value="TreeGrafter"/>
</dbReference>
<dbReference type="GO" id="GO:0019843">
    <property type="term" value="F:rRNA binding"/>
    <property type="evidence" value="ECO:0007669"/>
    <property type="project" value="UniProtKB-UniRule"/>
</dbReference>
<dbReference type="GO" id="GO:0003735">
    <property type="term" value="F:structural constituent of ribosome"/>
    <property type="evidence" value="ECO:0007669"/>
    <property type="project" value="InterPro"/>
</dbReference>
<dbReference type="GO" id="GO:0006412">
    <property type="term" value="P:translation"/>
    <property type="evidence" value="ECO:0007669"/>
    <property type="project" value="UniProtKB-UniRule"/>
</dbReference>
<dbReference type="CDD" id="cd00336">
    <property type="entry name" value="Ribosomal_L22"/>
    <property type="match status" value="1"/>
</dbReference>
<dbReference type="FunFam" id="3.90.470.10:FF:000001">
    <property type="entry name" value="50S ribosomal protein L22"/>
    <property type="match status" value="1"/>
</dbReference>
<dbReference type="Gene3D" id="3.90.470.10">
    <property type="entry name" value="Ribosomal protein L22/L17"/>
    <property type="match status" value="1"/>
</dbReference>
<dbReference type="HAMAP" id="MF_01331_B">
    <property type="entry name" value="Ribosomal_uL22_B"/>
    <property type="match status" value="1"/>
</dbReference>
<dbReference type="InterPro" id="IPR001063">
    <property type="entry name" value="Ribosomal_uL22"/>
</dbReference>
<dbReference type="InterPro" id="IPR005727">
    <property type="entry name" value="Ribosomal_uL22_bac/chlpt-type"/>
</dbReference>
<dbReference type="InterPro" id="IPR047867">
    <property type="entry name" value="Ribosomal_uL22_bac/org-type"/>
</dbReference>
<dbReference type="InterPro" id="IPR018260">
    <property type="entry name" value="Ribosomal_uL22_CS"/>
</dbReference>
<dbReference type="InterPro" id="IPR036394">
    <property type="entry name" value="Ribosomal_uL22_sf"/>
</dbReference>
<dbReference type="NCBIfam" id="TIGR01044">
    <property type="entry name" value="rplV_bact"/>
    <property type="match status" value="1"/>
</dbReference>
<dbReference type="PANTHER" id="PTHR13501">
    <property type="entry name" value="CHLOROPLAST 50S RIBOSOMAL PROTEIN L22-RELATED"/>
    <property type="match status" value="1"/>
</dbReference>
<dbReference type="PANTHER" id="PTHR13501:SF8">
    <property type="entry name" value="LARGE RIBOSOMAL SUBUNIT PROTEIN UL22M"/>
    <property type="match status" value="1"/>
</dbReference>
<dbReference type="Pfam" id="PF00237">
    <property type="entry name" value="Ribosomal_L22"/>
    <property type="match status" value="1"/>
</dbReference>
<dbReference type="SUPFAM" id="SSF54843">
    <property type="entry name" value="Ribosomal protein L22"/>
    <property type="match status" value="1"/>
</dbReference>
<dbReference type="PROSITE" id="PS00464">
    <property type="entry name" value="RIBOSOMAL_L22"/>
    <property type="match status" value="1"/>
</dbReference>
<keyword id="KW-1185">Reference proteome</keyword>
<keyword id="KW-0687">Ribonucleoprotein</keyword>
<keyword id="KW-0689">Ribosomal protein</keyword>
<keyword id="KW-0694">RNA-binding</keyword>
<keyword id="KW-0699">rRNA-binding</keyword>
<accession>Q21M52</accession>
<gene>
    <name evidence="1" type="primary">rplV</name>
    <name type="ordered locus">Sde_0965</name>
</gene>
<reference key="1">
    <citation type="journal article" date="2008" name="PLoS Genet.">
        <title>Complete genome sequence of the complex carbohydrate-degrading marine bacterium, Saccharophagus degradans strain 2-40 T.</title>
        <authorList>
            <person name="Weiner R.M."/>
            <person name="Taylor L.E. II"/>
            <person name="Henrissat B."/>
            <person name="Hauser L."/>
            <person name="Land M."/>
            <person name="Coutinho P.M."/>
            <person name="Rancurel C."/>
            <person name="Saunders E.H."/>
            <person name="Longmire A.G."/>
            <person name="Zhang H."/>
            <person name="Bayer E.A."/>
            <person name="Gilbert H.J."/>
            <person name="Larimer F."/>
            <person name="Zhulin I.B."/>
            <person name="Ekborg N.A."/>
            <person name="Lamed R."/>
            <person name="Richardson P.M."/>
            <person name="Borovok I."/>
            <person name="Hutcheson S."/>
        </authorList>
    </citation>
    <scope>NUCLEOTIDE SEQUENCE [LARGE SCALE GENOMIC DNA]</scope>
    <source>
        <strain>2-40 / ATCC 43961 / DSM 17024</strain>
    </source>
</reference>
<evidence type="ECO:0000255" key="1">
    <source>
        <dbReference type="HAMAP-Rule" id="MF_01331"/>
    </source>
</evidence>
<evidence type="ECO:0000305" key="2"/>
<name>RL22_SACD2</name>
<sequence length="110" mass="11956">MEVAAKLRGAGMSAQKARLVADQIRGKSVEEALDLLTFSTKKGAALIKKVLESAVANAEHNEGADVDELKVSTIFVDEGLTMKRIRPRAKGRADRILKRTCHITVKVADQ</sequence>
<organism>
    <name type="scientific">Saccharophagus degradans (strain 2-40 / ATCC 43961 / DSM 17024)</name>
    <dbReference type="NCBI Taxonomy" id="203122"/>
    <lineage>
        <taxon>Bacteria</taxon>
        <taxon>Pseudomonadati</taxon>
        <taxon>Pseudomonadota</taxon>
        <taxon>Gammaproteobacteria</taxon>
        <taxon>Cellvibrionales</taxon>
        <taxon>Cellvibrionaceae</taxon>
        <taxon>Saccharophagus</taxon>
    </lineage>
</organism>
<proteinExistence type="inferred from homology"/>
<protein>
    <recommendedName>
        <fullName evidence="1">Large ribosomal subunit protein uL22</fullName>
    </recommendedName>
    <alternativeName>
        <fullName evidence="2">50S ribosomal protein L22</fullName>
    </alternativeName>
</protein>